<proteinExistence type="inferred from homology"/>
<sequence length="261" mass="29760">MSKLIPAIKVNNLSFYYDTQKILEGVSMEIYQSKVTAIIGPSGCGKSTFLKCLNRMNELESEVRVEGRVEFFNQNIYERRVNLNRLRRQVSMVHPKPNLFPMSVYDNVAYGVKIVGWRPKLEIDDIVESALKDADLWDEIKHKIHKSALDLSGGQQQRLCIARALAVKPKVLLMDEPCFGLDPIASMKVESLIQSLRLRSELTMVIVSHNLPQISRISDFTAFFKGNESRIGQLVEFGLTKKIFNSPHDSRTREYVLSRLG</sequence>
<keyword id="KW-0067">ATP-binding</keyword>
<keyword id="KW-0997">Cell inner membrane</keyword>
<keyword id="KW-1003">Cell membrane</keyword>
<keyword id="KW-0472">Membrane</keyword>
<keyword id="KW-0547">Nucleotide-binding</keyword>
<keyword id="KW-0592">Phosphate transport</keyword>
<keyword id="KW-1278">Translocase</keyword>
<keyword id="KW-0813">Transport</keyword>
<comment type="function">
    <text evidence="1">Part of the ABC transporter complex PstSACB involved in phosphate import. Responsible for energy coupling to the transport system.</text>
</comment>
<comment type="catalytic activity">
    <reaction evidence="1">
        <text>phosphate(out) + ATP + H2O = ADP + 2 phosphate(in) + H(+)</text>
        <dbReference type="Rhea" id="RHEA:24440"/>
        <dbReference type="ChEBI" id="CHEBI:15377"/>
        <dbReference type="ChEBI" id="CHEBI:15378"/>
        <dbReference type="ChEBI" id="CHEBI:30616"/>
        <dbReference type="ChEBI" id="CHEBI:43474"/>
        <dbReference type="ChEBI" id="CHEBI:456216"/>
        <dbReference type="EC" id="7.3.2.1"/>
    </reaction>
</comment>
<comment type="subunit">
    <text evidence="1">The complex is composed of two ATP-binding proteins (PstB), two transmembrane proteins (PstC and PstA) and a solute-binding protein (PstS).</text>
</comment>
<comment type="subcellular location">
    <subcellularLocation>
        <location evidence="1">Cell inner membrane</location>
        <topology evidence="1">Peripheral membrane protein</topology>
    </subcellularLocation>
</comment>
<comment type="similarity">
    <text evidence="1">Belongs to the ABC transporter superfamily. Phosphate importer (TC 3.A.1.7) family.</text>
</comment>
<dbReference type="EC" id="7.3.2.1" evidence="1"/>
<dbReference type="EMBL" id="CP000117">
    <property type="protein sequence ID" value="ABA24110.1"/>
    <property type="molecule type" value="Genomic_DNA"/>
</dbReference>
<dbReference type="SMR" id="Q3M4H6"/>
<dbReference type="STRING" id="240292.Ava_4512"/>
<dbReference type="KEGG" id="ava:Ava_4512"/>
<dbReference type="eggNOG" id="COG1117">
    <property type="taxonomic scope" value="Bacteria"/>
</dbReference>
<dbReference type="HOGENOM" id="CLU_000604_1_22_3"/>
<dbReference type="Proteomes" id="UP000002533">
    <property type="component" value="Chromosome"/>
</dbReference>
<dbReference type="GO" id="GO:0005886">
    <property type="term" value="C:plasma membrane"/>
    <property type="evidence" value="ECO:0007669"/>
    <property type="project" value="UniProtKB-SubCell"/>
</dbReference>
<dbReference type="GO" id="GO:0005524">
    <property type="term" value="F:ATP binding"/>
    <property type="evidence" value="ECO:0007669"/>
    <property type="project" value="UniProtKB-KW"/>
</dbReference>
<dbReference type="GO" id="GO:0016887">
    <property type="term" value="F:ATP hydrolysis activity"/>
    <property type="evidence" value="ECO:0007669"/>
    <property type="project" value="InterPro"/>
</dbReference>
<dbReference type="GO" id="GO:0015415">
    <property type="term" value="F:ATPase-coupled phosphate ion transmembrane transporter activity"/>
    <property type="evidence" value="ECO:0007669"/>
    <property type="project" value="UniProtKB-EC"/>
</dbReference>
<dbReference type="GO" id="GO:0035435">
    <property type="term" value="P:phosphate ion transmembrane transport"/>
    <property type="evidence" value="ECO:0007669"/>
    <property type="project" value="InterPro"/>
</dbReference>
<dbReference type="CDD" id="cd03260">
    <property type="entry name" value="ABC_PstB_phosphate_transporter"/>
    <property type="match status" value="1"/>
</dbReference>
<dbReference type="Gene3D" id="3.40.50.300">
    <property type="entry name" value="P-loop containing nucleotide triphosphate hydrolases"/>
    <property type="match status" value="1"/>
</dbReference>
<dbReference type="InterPro" id="IPR003593">
    <property type="entry name" value="AAA+_ATPase"/>
</dbReference>
<dbReference type="InterPro" id="IPR003439">
    <property type="entry name" value="ABC_transporter-like_ATP-bd"/>
</dbReference>
<dbReference type="InterPro" id="IPR017871">
    <property type="entry name" value="ABC_transporter-like_CS"/>
</dbReference>
<dbReference type="InterPro" id="IPR027417">
    <property type="entry name" value="P-loop_NTPase"/>
</dbReference>
<dbReference type="InterPro" id="IPR005670">
    <property type="entry name" value="PstB-like"/>
</dbReference>
<dbReference type="NCBIfam" id="NF010851">
    <property type="entry name" value="PRK14258.1"/>
    <property type="match status" value="1"/>
</dbReference>
<dbReference type="PANTHER" id="PTHR43423">
    <property type="entry name" value="ABC TRANSPORTER I FAMILY MEMBER 17"/>
    <property type="match status" value="1"/>
</dbReference>
<dbReference type="PANTHER" id="PTHR43423:SF9">
    <property type="entry name" value="PHOSPHATE IMPORT ATP-BINDING PROTEIN PSTB 3"/>
    <property type="match status" value="1"/>
</dbReference>
<dbReference type="Pfam" id="PF00005">
    <property type="entry name" value="ABC_tran"/>
    <property type="match status" value="1"/>
</dbReference>
<dbReference type="SMART" id="SM00382">
    <property type="entry name" value="AAA"/>
    <property type="match status" value="1"/>
</dbReference>
<dbReference type="SUPFAM" id="SSF52540">
    <property type="entry name" value="P-loop containing nucleoside triphosphate hydrolases"/>
    <property type="match status" value="1"/>
</dbReference>
<dbReference type="PROSITE" id="PS00211">
    <property type="entry name" value="ABC_TRANSPORTER_1"/>
    <property type="match status" value="1"/>
</dbReference>
<dbReference type="PROSITE" id="PS50893">
    <property type="entry name" value="ABC_TRANSPORTER_2"/>
    <property type="match status" value="1"/>
</dbReference>
<dbReference type="PROSITE" id="PS51238">
    <property type="entry name" value="PSTB"/>
    <property type="match status" value="1"/>
</dbReference>
<organism>
    <name type="scientific">Trichormus variabilis (strain ATCC 29413 / PCC 7937)</name>
    <name type="common">Anabaena variabilis</name>
    <dbReference type="NCBI Taxonomy" id="240292"/>
    <lineage>
        <taxon>Bacteria</taxon>
        <taxon>Bacillati</taxon>
        <taxon>Cyanobacteriota</taxon>
        <taxon>Cyanophyceae</taxon>
        <taxon>Nostocales</taxon>
        <taxon>Nostocaceae</taxon>
        <taxon>Trichormus</taxon>
    </lineage>
</organism>
<feature type="chain" id="PRO_0000272419" description="Phosphate import ATP-binding protein PstB 4">
    <location>
        <begin position="1"/>
        <end position="261"/>
    </location>
</feature>
<feature type="domain" description="ABC transporter" evidence="1">
    <location>
        <begin position="8"/>
        <end position="256"/>
    </location>
</feature>
<feature type="binding site" evidence="1">
    <location>
        <begin position="40"/>
        <end position="47"/>
    </location>
    <ligand>
        <name>ATP</name>
        <dbReference type="ChEBI" id="CHEBI:30616"/>
    </ligand>
</feature>
<gene>
    <name evidence="1" type="primary">pstB4</name>
    <name type="ordered locus">Ava_4512</name>
</gene>
<evidence type="ECO:0000255" key="1">
    <source>
        <dbReference type="HAMAP-Rule" id="MF_01702"/>
    </source>
</evidence>
<reference key="1">
    <citation type="journal article" date="2014" name="Stand. Genomic Sci.">
        <title>Complete genome sequence of Anabaena variabilis ATCC 29413.</title>
        <authorList>
            <person name="Thiel T."/>
            <person name="Pratte B.S."/>
            <person name="Zhong J."/>
            <person name="Goodwin L."/>
            <person name="Copeland A."/>
            <person name="Lucas S."/>
            <person name="Han C."/>
            <person name="Pitluck S."/>
            <person name="Land M.L."/>
            <person name="Kyrpides N.C."/>
            <person name="Woyke T."/>
        </authorList>
    </citation>
    <scope>NUCLEOTIDE SEQUENCE [LARGE SCALE GENOMIC DNA]</scope>
    <source>
        <strain>ATCC 29413 / PCC 7937</strain>
    </source>
</reference>
<name>PSTB4_TRIV2</name>
<accession>Q3M4H6</accession>
<protein>
    <recommendedName>
        <fullName evidence="1">Phosphate import ATP-binding protein PstB 4</fullName>
        <ecNumber evidence="1">7.3.2.1</ecNumber>
    </recommendedName>
    <alternativeName>
        <fullName evidence="1">ABC phosphate transporter 4</fullName>
    </alternativeName>
    <alternativeName>
        <fullName evidence="1">Phosphate-transporting ATPase 4</fullName>
    </alternativeName>
</protein>